<name>END4_CHLCV</name>
<dbReference type="EC" id="3.1.21.2" evidence="1"/>
<dbReference type="EMBL" id="AE015925">
    <property type="protein sequence ID" value="AAP04765.1"/>
    <property type="molecule type" value="Genomic_DNA"/>
</dbReference>
<dbReference type="RefSeq" id="WP_011005986.1">
    <property type="nucleotide sequence ID" value="NC_003361.3"/>
</dbReference>
<dbReference type="SMR" id="Q824X6"/>
<dbReference type="STRING" id="227941.CCA_00012"/>
<dbReference type="KEGG" id="cca:CCA_00012"/>
<dbReference type="eggNOG" id="COG0648">
    <property type="taxonomic scope" value="Bacteria"/>
</dbReference>
<dbReference type="HOGENOM" id="CLU_025885_0_1_0"/>
<dbReference type="OrthoDB" id="9805666at2"/>
<dbReference type="Proteomes" id="UP000002193">
    <property type="component" value="Chromosome"/>
</dbReference>
<dbReference type="GO" id="GO:0008833">
    <property type="term" value="F:deoxyribonuclease IV (phage-T4-induced) activity"/>
    <property type="evidence" value="ECO:0007669"/>
    <property type="project" value="UniProtKB-UniRule"/>
</dbReference>
<dbReference type="GO" id="GO:0003677">
    <property type="term" value="F:DNA binding"/>
    <property type="evidence" value="ECO:0007669"/>
    <property type="project" value="InterPro"/>
</dbReference>
<dbReference type="GO" id="GO:0003906">
    <property type="term" value="F:DNA-(apurinic or apyrimidinic site) endonuclease activity"/>
    <property type="evidence" value="ECO:0007669"/>
    <property type="project" value="TreeGrafter"/>
</dbReference>
<dbReference type="GO" id="GO:0008081">
    <property type="term" value="F:phosphoric diester hydrolase activity"/>
    <property type="evidence" value="ECO:0007669"/>
    <property type="project" value="TreeGrafter"/>
</dbReference>
<dbReference type="GO" id="GO:0008270">
    <property type="term" value="F:zinc ion binding"/>
    <property type="evidence" value="ECO:0007669"/>
    <property type="project" value="UniProtKB-UniRule"/>
</dbReference>
<dbReference type="GO" id="GO:0006284">
    <property type="term" value="P:base-excision repair"/>
    <property type="evidence" value="ECO:0007669"/>
    <property type="project" value="TreeGrafter"/>
</dbReference>
<dbReference type="CDD" id="cd00019">
    <property type="entry name" value="AP2Ec"/>
    <property type="match status" value="1"/>
</dbReference>
<dbReference type="FunFam" id="3.20.20.150:FF:000001">
    <property type="entry name" value="Probable endonuclease 4"/>
    <property type="match status" value="1"/>
</dbReference>
<dbReference type="Gene3D" id="3.20.20.150">
    <property type="entry name" value="Divalent-metal-dependent TIM barrel enzymes"/>
    <property type="match status" value="1"/>
</dbReference>
<dbReference type="HAMAP" id="MF_00152">
    <property type="entry name" value="Nfo"/>
    <property type="match status" value="1"/>
</dbReference>
<dbReference type="InterPro" id="IPR001719">
    <property type="entry name" value="AP_endonuc_2"/>
</dbReference>
<dbReference type="InterPro" id="IPR018246">
    <property type="entry name" value="AP_endonuc_F2_Zn_BS"/>
</dbReference>
<dbReference type="InterPro" id="IPR036237">
    <property type="entry name" value="Xyl_isomerase-like_sf"/>
</dbReference>
<dbReference type="InterPro" id="IPR013022">
    <property type="entry name" value="Xyl_isomerase-like_TIM-brl"/>
</dbReference>
<dbReference type="NCBIfam" id="TIGR00587">
    <property type="entry name" value="nfo"/>
    <property type="match status" value="1"/>
</dbReference>
<dbReference type="NCBIfam" id="NF002197">
    <property type="entry name" value="PRK01060.1-2"/>
    <property type="match status" value="1"/>
</dbReference>
<dbReference type="PANTHER" id="PTHR21445:SF0">
    <property type="entry name" value="APURINIC-APYRIMIDINIC ENDONUCLEASE"/>
    <property type="match status" value="1"/>
</dbReference>
<dbReference type="PANTHER" id="PTHR21445">
    <property type="entry name" value="ENDONUCLEASE IV ENDODEOXYRIBONUCLEASE IV"/>
    <property type="match status" value="1"/>
</dbReference>
<dbReference type="Pfam" id="PF01261">
    <property type="entry name" value="AP_endonuc_2"/>
    <property type="match status" value="1"/>
</dbReference>
<dbReference type="SMART" id="SM00518">
    <property type="entry name" value="AP2Ec"/>
    <property type="match status" value="1"/>
</dbReference>
<dbReference type="SUPFAM" id="SSF51658">
    <property type="entry name" value="Xylose isomerase-like"/>
    <property type="match status" value="1"/>
</dbReference>
<dbReference type="PROSITE" id="PS00729">
    <property type="entry name" value="AP_NUCLEASE_F2_1"/>
    <property type="match status" value="1"/>
</dbReference>
<dbReference type="PROSITE" id="PS00730">
    <property type="entry name" value="AP_NUCLEASE_F2_2"/>
    <property type="match status" value="1"/>
</dbReference>
<dbReference type="PROSITE" id="PS00731">
    <property type="entry name" value="AP_NUCLEASE_F2_3"/>
    <property type="match status" value="1"/>
</dbReference>
<dbReference type="PROSITE" id="PS51432">
    <property type="entry name" value="AP_NUCLEASE_F2_4"/>
    <property type="match status" value="1"/>
</dbReference>
<organism>
    <name type="scientific">Chlamydia caviae (strain ATCC VR-813 / DSM 19441 / 03DC25 / GPIC)</name>
    <name type="common">Chlamydophila caviae</name>
    <dbReference type="NCBI Taxonomy" id="227941"/>
    <lineage>
        <taxon>Bacteria</taxon>
        <taxon>Pseudomonadati</taxon>
        <taxon>Chlamydiota</taxon>
        <taxon>Chlamydiia</taxon>
        <taxon>Chlamydiales</taxon>
        <taxon>Chlamydiaceae</taxon>
        <taxon>Chlamydia/Chlamydophila group</taxon>
        <taxon>Chlamydia</taxon>
    </lineage>
</organism>
<feature type="chain" id="PRO_0000190831" description="Probable endonuclease 4">
    <location>
        <begin position="1"/>
        <end position="289"/>
    </location>
</feature>
<feature type="binding site" evidence="1">
    <location>
        <position position="75"/>
    </location>
    <ligand>
        <name>Zn(2+)</name>
        <dbReference type="ChEBI" id="CHEBI:29105"/>
        <label>1</label>
    </ligand>
</feature>
<feature type="binding site" evidence="1">
    <location>
        <position position="115"/>
    </location>
    <ligand>
        <name>Zn(2+)</name>
        <dbReference type="ChEBI" id="CHEBI:29105"/>
        <label>1</label>
    </ligand>
</feature>
<feature type="binding site" evidence="1">
    <location>
        <position position="153"/>
    </location>
    <ligand>
        <name>Zn(2+)</name>
        <dbReference type="ChEBI" id="CHEBI:29105"/>
        <label>1</label>
    </ligand>
</feature>
<feature type="binding site" evidence="1">
    <location>
        <position position="153"/>
    </location>
    <ligand>
        <name>Zn(2+)</name>
        <dbReference type="ChEBI" id="CHEBI:29105"/>
        <label>2</label>
    </ligand>
</feature>
<feature type="binding site" evidence="1">
    <location>
        <position position="187"/>
    </location>
    <ligand>
        <name>Zn(2+)</name>
        <dbReference type="ChEBI" id="CHEBI:29105"/>
        <label>2</label>
    </ligand>
</feature>
<feature type="binding site" evidence="1">
    <location>
        <position position="190"/>
    </location>
    <ligand>
        <name>Zn(2+)</name>
        <dbReference type="ChEBI" id="CHEBI:29105"/>
        <label>3</label>
    </ligand>
</feature>
<feature type="binding site" evidence="1">
    <location>
        <position position="224"/>
    </location>
    <ligand>
        <name>Zn(2+)</name>
        <dbReference type="ChEBI" id="CHEBI:29105"/>
        <label>2</label>
    </ligand>
</feature>
<feature type="binding site" evidence="1">
    <location>
        <position position="237"/>
    </location>
    <ligand>
        <name>Zn(2+)</name>
        <dbReference type="ChEBI" id="CHEBI:29105"/>
        <label>3</label>
    </ligand>
</feature>
<feature type="binding site" evidence="1">
    <location>
        <position position="239"/>
    </location>
    <ligand>
        <name>Zn(2+)</name>
        <dbReference type="ChEBI" id="CHEBI:29105"/>
        <label>3</label>
    </ligand>
</feature>
<feature type="binding site" evidence="1">
    <location>
        <position position="269"/>
    </location>
    <ligand>
        <name>Zn(2+)</name>
        <dbReference type="ChEBI" id="CHEBI:29105"/>
        <label>2</label>
    </ligand>
</feature>
<accession>Q824X6</accession>
<proteinExistence type="inferred from homology"/>
<gene>
    <name evidence="1" type="primary">nfo</name>
    <name type="ordered locus">CCA_00012</name>
</gene>
<keyword id="KW-0227">DNA damage</keyword>
<keyword id="KW-0234">DNA repair</keyword>
<keyword id="KW-0255">Endonuclease</keyword>
<keyword id="KW-0378">Hydrolase</keyword>
<keyword id="KW-0479">Metal-binding</keyword>
<keyword id="KW-0540">Nuclease</keyword>
<keyword id="KW-0862">Zinc</keyword>
<protein>
    <recommendedName>
        <fullName evidence="1">Probable endonuclease 4</fullName>
        <ecNumber evidence="1">3.1.21.2</ecNumber>
    </recommendedName>
    <alternativeName>
        <fullName evidence="1">Endodeoxyribonuclease IV</fullName>
    </alternativeName>
    <alternativeName>
        <fullName evidence="1">Endonuclease IV</fullName>
    </alternativeName>
</protein>
<evidence type="ECO:0000255" key="1">
    <source>
        <dbReference type="HAMAP-Rule" id="MF_00152"/>
    </source>
</evidence>
<sequence length="289" mass="32271">MQVFPPPQVPLLGAHTSTAGGLHNAIYEGQEIGASTIQMFTANQRQWRRRPLTDSLINSFKTALKETSLSYIMSHAGYLINPGSPNPEILEKSRICIQQEIQDCISLGINFVNFHPGAAVNDTKETCLDRIISSFSLMEPLFENSPPLVVLFETTAGQGTLVGSNFEELSYLIDNLNHKIPVGVCIDTCHIFAAGYDITSPESWKRVLKNFDDVIGLSYLRAFHLNDSMFPLGQHKDRHAPLGEGDIGIESFKFLMTNEDTRMIPKYLETPGGPDLWAKEIRQLQSFQK</sequence>
<reference key="1">
    <citation type="journal article" date="2003" name="Nucleic Acids Res.">
        <title>Genome sequence of Chlamydophila caviae (Chlamydia psittaci GPIC): examining the role of niche-specific genes in the evolution of the Chlamydiaceae.</title>
        <authorList>
            <person name="Read T.D."/>
            <person name="Myers G.S.A."/>
            <person name="Brunham R.C."/>
            <person name="Nelson W.C."/>
            <person name="Paulsen I.T."/>
            <person name="Heidelberg J.F."/>
            <person name="Holtzapple E.K."/>
            <person name="Khouri H.M."/>
            <person name="Federova N.B."/>
            <person name="Carty H.A."/>
            <person name="Umayam L.A."/>
            <person name="Haft D.H."/>
            <person name="Peterson J.D."/>
            <person name="Beanan M.J."/>
            <person name="White O."/>
            <person name="Salzberg S.L."/>
            <person name="Hsia R.-C."/>
            <person name="McClarty G."/>
            <person name="Rank R.G."/>
            <person name="Bavoil P.M."/>
            <person name="Fraser C.M."/>
        </authorList>
    </citation>
    <scope>NUCLEOTIDE SEQUENCE [LARGE SCALE GENOMIC DNA]</scope>
    <source>
        <strain>ATCC VR-813 / DSM 19441 / 03DC25 / GPIC</strain>
    </source>
</reference>
<comment type="function">
    <text evidence="1">Endonuclease IV plays a role in DNA repair. It cleaves phosphodiester bonds at apurinic or apyrimidinic (AP) sites, generating a 3'-hydroxyl group and a 5'-terminal sugar phosphate.</text>
</comment>
<comment type="catalytic activity">
    <reaction evidence="1">
        <text>Endonucleolytic cleavage to 5'-phosphooligonucleotide end-products.</text>
        <dbReference type="EC" id="3.1.21.2"/>
    </reaction>
</comment>
<comment type="cofactor">
    <cofactor evidence="1">
        <name>Zn(2+)</name>
        <dbReference type="ChEBI" id="CHEBI:29105"/>
    </cofactor>
    <text evidence="1">Binds 3 Zn(2+) ions.</text>
</comment>
<comment type="similarity">
    <text evidence="1">Belongs to the AP endonuclease 2 family.</text>
</comment>